<proteinExistence type="inferred from homology"/>
<reference key="1">
    <citation type="journal article" date="2008" name="BMC Genomics">
        <title>The missing link: Bordetella petrii is endowed with both the metabolic versatility of environmental bacteria and virulence traits of pathogenic Bordetellae.</title>
        <authorList>
            <person name="Gross R."/>
            <person name="Guzman C.A."/>
            <person name="Sebaihia M."/>
            <person name="Martin dos Santos V.A.P."/>
            <person name="Pieper D.H."/>
            <person name="Koebnik R."/>
            <person name="Lechner M."/>
            <person name="Bartels D."/>
            <person name="Buhrmester J."/>
            <person name="Choudhuri J.V."/>
            <person name="Ebensen T."/>
            <person name="Gaigalat L."/>
            <person name="Herrmann S."/>
            <person name="Khachane A.N."/>
            <person name="Larisch C."/>
            <person name="Link S."/>
            <person name="Linke B."/>
            <person name="Meyer F."/>
            <person name="Mormann S."/>
            <person name="Nakunst D."/>
            <person name="Rueckert C."/>
            <person name="Schneiker-Bekel S."/>
            <person name="Schulze K."/>
            <person name="Voerholter F.-J."/>
            <person name="Yevsa T."/>
            <person name="Engle J.T."/>
            <person name="Goldman W.E."/>
            <person name="Puehler A."/>
            <person name="Goebel U.B."/>
            <person name="Goesmann A."/>
            <person name="Bloecker H."/>
            <person name="Kaiser O."/>
            <person name="Martinez-Arias R."/>
        </authorList>
    </citation>
    <scope>NUCLEOTIDE SEQUENCE [LARGE SCALE GENOMIC DNA]</scope>
    <source>
        <strain>ATCC BAA-461 / DSM 12804 / CCUG 43448</strain>
    </source>
</reference>
<protein>
    <recommendedName>
        <fullName evidence="1">Small ribosomal subunit protein uS17</fullName>
    </recommendedName>
    <alternativeName>
        <fullName evidence="2">30S ribosomal protein S17</fullName>
    </alternativeName>
</protein>
<name>RS17_BORPD</name>
<keyword id="KW-0687">Ribonucleoprotein</keyword>
<keyword id="KW-0689">Ribosomal protein</keyword>
<keyword id="KW-0694">RNA-binding</keyword>
<keyword id="KW-0699">rRNA-binding</keyword>
<accession>A9IIY6</accession>
<dbReference type="EMBL" id="AM902716">
    <property type="protein sequence ID" value="CAP45295.1"/>
    <property type="molecule type" value="Genomic_DNA"/>
</dbReference>
<dbReference type="SMR" id="A9IIY6"/>
<dbReference type="STRING" id="94624.Bpet4943"/>
<dbReference type="KEGG" id="bpt:Bpet4943"/>
<dbReference type="eggNOG" id="COG0186">
    <property type="taxonomic scope" value="Bacteria"/>
</dbReference>
<dbReference type="Proteomes" id="UP000001225">
    <property type="component" value="Chromosome"/>
</dbReference>
<dbReference type="GO" id="GO:0022627">
    <property type="term" value="C:cytosolic small ribosomal subunit"/>
    <property type="evidence" value="ECO:0007669"/>
    <property type="project" value="TreeGrafter"/>
</dbReference>
<dbReference type="GO" id="GO:0019843">
    <property type="term" value="F:rRNA binding"/>
    <property type="evidence" value="ECO:0007669"/>
    <property type="project" value="UniProtKB-UniRule"/>
</dbReference>
<dbReference type="GO" id="GO:0003735">
    <property type="term" value="F:structural constituent of ribosome"/>
    <property type="evidence" value="ECO:0007669"/>
    <property type="project" value="InterPro"/>
</dbReference>
<dbReference type="GO" id="GO:0006412">
    <property type="term" value="P:translation"/>
    <property type="evidence" value="ECO:0007669"/>
    <property type="project" value="UniProtKB-UniRule"/>
</dbReference>
<dbReference type="CDD" id="cd00364">
    <property type="entry name" value="Ribosomal_uS17"/>
    <property type="match status" value="1"/>
</dbReference>
<dbReference type="Gene3D" id="2.40.50.140">
    <property type="entry name" value="Nucleic acid-binding proteins"/>
    <property type="match status" value="1"/>
</dbReference>
<dbReference type="HAMAP" id="MF_01345_B">
    <property type="entry name" value="Ribosomal_uS17_B"/>
    <property type="match status" value="1"/>
</dbReference>
<dbReference type="InterPro" id="IPR012340">
    <property type="entry name" value="NA-bd_OB-fold"/>
</dbReference>
<dbReference type="InterPro" id="IPR000266">
    <property type="entry name" value="Ribosomal_uS17"/>
</dbReference>
<dbReference type="InterPro" id="IPR019984">
    <property type="entry name" value="Ribosomal_uS17_bact/chlr"/>
</dbReference>
<dbReference type="InterPro" id="IPR019979">
    <property type="entry name" value="Ribosomal_uS17_CS"/>
</dbReference>
<dbReference type="NCBIfam" id="NF004123">
    <property type="entry name" value="PRK05610.1"/>
    <property type="match status" value="1"/>
</dbReference>
<dbReference type="NCBIfam" id="TIGR03635">
    <property type="entry name" value="uS17_bact"/>
    <property type="match status" value="1"/>
</dbReference>
<dbReference type="PANTHER" id="PTHR10744">
    <property type="entry name" value="40S RIBOSOMAL PROTEIN S11 FAMILY MEMBER"/>
    <property type="match status" value="1"/>
</dbReference>
<dbReference type="PANTHER" id="PTHR10744:SF1">
    <property type="entry name" value="SMALL RIBOSOMAL SUBUNIT PROTEIN US17M"/>
    <property type="match status" value="1"/>
</dbReference>
<dbReference type="Pfam" id="PF00366">
    <property type="entry name" value="Ribosomal_S17"/>
    <property type="match status" value="1"/>
</dbReference>
<dbReference type="PRINTS" id="PR00973">
    <property type="entry name" value="RIBOSOMALS17"/>
</dbReference>
<dbReference type="SUPFAM" id="SSF50249">
    <property type="entry name" value="Nucleic acid-binding proteins"/>
    <property type="match status" value="1"/>
</dbReference>
<dbReference type="PROSITE" id="PS00056">
    <property type="entry name" value="RIBOSOMAL_S17"/>
    <property type="match status" value="1"/>
</dbReference>
<organism>
    <name type="scientific">Bordetella petrii (strain ATCC BAA-461 / DSM 12804 / CCUG 43448)</name>
    <dbReference type="NCBI Taxonomy" id="340100"/>
    <lineage>
        <taxon>Bacteria</taxon>
        <taxon>Pseudomonadati</taxon>
        <taxon>Pseudomonadota</taxon>
        <taxon>Betaproteobacteria</taxon>
        <taxon>Burkholderiales</taxon>
        <taxon>Alcaligenaceae</taxon>
        <taxon>Bordetella</taxon>
    </lineage>
</organism>
<feature type="chain" id="PRO_1000143227" description="Small ribosomal subunit protein uS17">
    <location>
        <begin position="1"/>
        <end position="92"/>
    </location>
</feature>
<evidence type="ECO:0000255" key="1">
    <source>
        <dbReference type="HAMAP-Rule" id="MF_01345"/>
    </source>
</evidence>
<evidence type="ECO:0000305" key="2"/>
<sequence length="92" mass="10582">MSETQNTQTKRQRTLVGKVVSNKMDKTVVVLVERRVKHPIYGKIVMRSAKYKAHDESNQYNEGDTVEIAEGRPISRSKSWNVVRLVEAVRII</sequence>
<gene>
    <name evidence="1" type="primary">rpsQ</name>
    <name type="ordered locus">Bpet4943</name>
</gene>
<comment type="function">
    <text evidence="1">One of the primary rRNA binding proteins, it binds specifically to the 5'-end of 16S ribosomal RNA.</text>
</comment>
<comment type="subunit">
    <text evidence="1">Part of the 30S ribosomal subunit.</text>
</comment>
<comment type="similarity">
    <text evidence="1">Belongs to the universal ribosomal protein uS17 family.</text>
</comment>